<organism>
    <name type="scientific">Human cytomegalovirus (strain Towne)</name>
    <name type="common">HHV-5</name>
    <name type="synonym">Human herpesvirus 5</name>
    <dbReference type="NCBI Taxonomy" id="10363"/>
    <lineage>
        <taxon>Viruses</taxon>
        <taxon>Duplodnaviria</taxon>
        <taxon>Heunggongvirae</taxon>
        <taxon>Peploviricota</taxon>
        <taxon>Herviviricetes</taxon>
        <taxon>Herpesvirales</taxon>
        <taxon>Orthoherpesviridae</taxon>
        <taxon>Betaherpesvirinae</taxon>
        <taxon>Cytomegalovirus</taxon>
        <taxon>Cytomegalovirus humanbeta5</taxon>
        <taxon>Human cytomegalovirus</taxon>
    </lineage>
</organism>
<sequence>MLPLIKQEDIKPEPDFTIQYRNKIIDTAGCIVISDSEEEQGEEVETRGATASSPSTGSGTPRVTSPTHPLSQMNHPPLPDPLGRPDEDSSSSSSSCSSASDSESESEEMKCSSGGGASVTSSHHGRGGFGGAASSSLLSCGHQSSGGASTGPRKKKSKRISELDNEKVRNIMKDKNTPFCTPNVQTRRGRVKIDEVSRMFRNTNRSLEYKNLPFTIPSMHQVLDEAIKACKTMQVNNKGIQIIYTRNHEVKSEVDAVRCRLGTMCTWPSPLPSSWSTPCP</sequence>
<accession>P06434</accession>
<protein>
    <recommendedName>
        <fullName>30 kDa immediate-early protein 2</fullName>
        <shortName>IE2</shortName>
    </recommendedName>
</protein>
<reference key="1">
    <citation type="journal article" date="1985" name="J. Virol.">
        <title>Multiple spliced and unspliced transcripts from human cytomegalovirus immediate-early region 2 and evidence for a common initiation site within immediate-early region 1.</title>
        <authorList>
            <person name="Stenberg R.M."/>
            <person name="Witte P.R."/>
            <person name="Stinski M.F."/>
        </authorList>
    </citation>
    <scope>NUCLEOTIDE SEQUENCE [GENOMIC DNA]</scope>
</reference>
<gene>
    <name type="primary">UL122</name>
</gene>
<feature type="chain" id="PRO_0000115353" description="30 kDa immediate-early protein 2">
    <location>
        <begin position="1"/>
        <end position="280"/>
    </location>
</feature>
<feature type="region of interest" description="Disordered" evidence="1">
    <location>
        <begin position="36"/>
        <end position="164"/>
    </location>
</feature>
<feature type="compositionally biased region" description="Low complexity" evidence="1">
    <location>
        <begin position="47"/>
        <end position="67"/>
    </location>
</feature>
<feature type="compositionally biased region" description="Low complexity" evidence="1">
    <location>
        <begin position="90"/>
        <end position="101"/>
    </location>
</feature>
<feature type="compositionally biased region" description="Low complexity" evidence="1">
    <location>
        <begin position="132"/>
        <end position="147"/>
    </location>
</feature>
<organismHost>
    <name type="scientific">Homo sapiens</name>
    <name type="common">Human</name>
    <dbReference type="NCBI Taxonomy" id="9606"/>
</organismHost>
<proteinExistence type="predicted"/>
<evidence type="ECO:0000256" key="1">
    <source>
        <dbReference type="SAM" id="MobiDB-lite"/>
    </source>
</evidence>
<name>VIE3_HCMVT</name>
<dbReference type="EMBL" id="M11298">
    <property type="protein sequence ID" value="AAA45952.1"/>
    <property type="molecule type" value="Genomic_DNA"/>
</dbReference>
<dbReference type="PIR" id="A03725">
    <property type="entry name" value="EDBE3T"/>
</dbReference>
<dbReference type="SMR" id="P06434"/>
<dbReference type="DrugBank" id="DB06759">
    <property type="generic name" value="Fomivirsen"/>
</dbReference>
<dbReference type="GO" id="GO:0006355">
    <property type="term" value="P:regulation of DNA-templated transcription"/>
    <property type="evidence" value="ECO:0007669"/>
    <property type="project" value="InterPro"/>
</dbReference>
<dbReference type="InterPro" id="IPR005028">
    <property type="entry name" value="Herpes_IE2_3"/>
</dbReference>
<dbReference type="Pfam" id="PF03361">
    <property type="entry name" value="Herpes_IE2_3"/>
    <property type="match status" value="1"/>
</dbReference>
<keyword id="KW-0025">Alternative splicing</keyword>
<keyword id="KW-0244">Early protein</keyword>
<comment type="function">
    <text>Activates the E1.7 promoter. This activation is augmented by the IE1 protein. It down-regulates the transcription of genes under the control of the major IE promoter.</text>
</comment>
<comment type="alternative products">
    <event type="alternative splicing"/>
    <isoform>
        <id>P06434-1</id>
        <name>1</name>
        <sequence type="displayed"/>
    </isoform>
    <text>At least 2 isoforms are produced.</text>
</comment>